<keyword id="KW-0217">Developmental protein</keyword>
<keyword id="KW-0221">Differentiation</keyword>
<keyword id="KW-1015">Disulfide bond</keyword>
<keyword id="KW-1185">Reference proteome</keyword>
<keyword id="KW-0964">Secreted</keyword>
<keyword id="KW-0732">Signal</keyword>
<keyword id="KW-0879">Wnt signaling pathway</keyword>
<dbReference type="EMBL" id="AF117757">
    <property type="protein sequence ID" value="AAD25051.1"/>
    <property type="molecule type" value="mRNA"/>
</dbReference>
<dbReference type="EMBL" id="BC149165">
    <property type="protein sequence ID" value="AAI49166.1"/>
    <property type="molecule type" value="mRNA"/>
</dbReference>
<dbReference type="RefSeq" id="NP_776886.1">
    <property type="nucleotide sequence ID" value="NM_174461.3"/>
</dbReference>
<dbReference type="SMR" id="Q9XSC1"/>
<dbReference type="FunCoup" id="Q9XSC1">
    <property type="interactions" value="136"/>
</dbReference>
<dbReference type="STRING" id="9913.ENSBTAP00000024709"/>
<dbReference type="MEROPS" id="I93.002"/>
<dbReference type="PaxDb" id="9913-ENSBTAP00000024709"/>
<dbReference type="Ensembl" id="ENSBTAT00000024709.7">
    <property type="protein sequence ID" value="ENSBTAP00000024709.5"/>
    <property type="gene ID" value="ENSBTAG00000018566.7"/>
</dbReference>
<dbReference type="GeneID" id="282069"/>
<dbReference type="KEGG" id="bta:282069"/>
<dbReference type="CTD" id="6425"/>
<dbReference type="VEuPathDB" id="HostDB:ENSBTAG00000018566"/>
<dbReference type="VGNC" id="VGNC:34523">
    <property type="gene designation" value="SFRP5"/>
</dbReference>
<dbReference type="eggNOG" id="KOG3577">
    <property type="taxonomic scope" value="Eukaryota"/>
</dbReference>
<dbReference type="GeneTree" id="ENSGT00940000160608"/>
<dbReference type="HOGENOM" id="CLU_054647_1_0_1"/>
<dbReference type="InParanoid" id="Q9XSC1"/>
<dbReference type="OMA" id="GGQHYDY"/>
<dbReference type="OrthoDB" id="5985572at2759"/>
<dbReference type="TreeFam" id="TF350133"/>
<dbReference type="Proteomes" id="UP000009136">
    <property type="component" value="Chromosome 26"/>
</dbReference>
<dbReference type="Bgee" id="ENSBTAG00000018566">
    <property type="expression patterns" value="Expressed in bone marrow and 90 other cell types or tissues"/>
</dbReference>
<dbReference type="GO" id="GO:0005615">
    <property type="term" value="C:extracellular space"/>
    <property type="evidence" value="ECO:0000318"/>
    <property type="project" value="GO_Central"/>
</dbReference>
<dbReference type="GO" id="GO:0017147">
    <property type="term" value="F:Wnt-protein binding"/>
    <property type="evidence" value="ECO:0000318"/>
    <property type="project" value="GO_Central"/>
</dbReference>
<dbReference type="GO" id="GO:0060070">
    <property type="term" value="P:canonical Wnt signaling pathway"/>
    <property type="evidence" value="ECO:0000318"/>
    <property type="project" value="GO_Central"/>
</dbReference>
<dbReference type="GO" id="GO:0030154">
    <property type="term" value="P:cell differentiation"/>
    <property type="evidence" value="ECO:0007669"/>
    <property type="project" value="UniProtKB-KW"/>
</dbReference>
<dbReference type="GO" id="GO:0048546">
    <property type="term" value="P:digestive tract morphogenesis"/>
    <property type="evidence" value="ECO:0007669"/>
    <property type="project" value="Ensembl"/>
</dbReference>
<dbReference type="GO" id="GO:0090090">
    <property type="term" value="P:negative regulation of canonical Wnt signaling pathway"/>
    <property type="evidence" value="ECO:0007669"/>
    <property type="project" value="Ensembl"/>
</dbReference>
<dbReference type="GO" id="GO:0008285">
    <property type="term" value="P:negative regulation of cell population proliferation"/>
    <property type="evidence" value="ECO:0007669"/>
    <property type="project" value="Ensembl"/>
</dbReference>
<dbReference type="GO" id="GO:2000051">
    <property type="term" value="P:negative regulation of non-canonical Wnt signaling pathway"/>
    <property type="evidence" value="ECO:0007669"/>
    <property type="project" value="Ensembl"/>
</dbReference>
<dbReference type="GO" id="GO:0051898">
    <property type="term" value="P:negative regulation of phosphatidylinositol 3-kinase/protein kinase B signal transduction"/>
    <property type="evidence" value="ECO:0007669"/>
    <property type="project" value="Ensembl"/>
</dbReference>
<dbReference type="GO" id="GO:0030178">
    <property type="term" value="P:negative regulation of Wnt signaling pathway"/>
    <property type="evidence" value="ECO:0000314"/>
    <property type="project" value="BHF-UCL"/>
</dbReference>
<dbReference type="GO" id="GO:0035567">
    <property type="term" value="P:non-canonical Wnt signaling pathway"/>
    <property type="evidence" value="ECO:0000318"/>
    <property type="project" value="GO_Central"/>
</dbReference>
<dbReference type="GO" id="GO:0006357">
    <property type="term" value="P:regulation of transcription by RNA polymerase II"/>
    <property type="evidence" value="ECO:0007669"/>
    <property type="project" value="Ensembl"/>
</dbReference>
<dbReference type="CDD" id="cd07444">
    <property type="entry name" value="CRD_SFRP5"/>
    <property type="match status" value="1"/>
</dbReference>
<dbReference type="CDD" id="cd03580">
    <property type="entry name" value="NTR_Sfrp1_like"/>
    <property type="match status" value="1"/>
</dbReference>
<dbReference type="FunFam" id="1.10.2000.10:FF:000001">
    <property type="entry name" value="secreted frizzled-related protein 2"/>
    <property type="match status" value="1"/>
</dbReference>
<dbReference type="FunFam" id="2.40.50.120:FF:000014">
    <property type="entry name" value="Secreted frizzled-related protein 5"/>
    <property type="match status" value="1"/>
</dbReference>
<dbReference type="Gene3D" id="2.40.50.120">
    <property type="match status" value="1"/>
</dbReference>
<dbReference type="Gene3D" id="1.10.2000.10">
    <property type="entry name" value="Frizzled cysteine-rich domain"/>
    <property type="match status" value="1"/>
</dbReference>
<dbReference type="InterPro" id="IPR015526">
    <property type="entry name" value="Frizzled/SFRP"/>
</dbReference>
<dbReference type="InterPro" id="IPR020067">
    <property type="entry name" value="Frizzled_dom"/>
</dbReference>
<dbReference type="InterPro" id="IPR036790">
    <property type="entry name" value="Frizzled_dom_sf"/>
</dbReference>
<dbReference type="InterPro" id="IPR001134">
    <property type="entry name" value="Netrin_domain"/>
</dbReference>
<dbReference type="InterPro" id="IPR018933">
    <property type="entry name" value="Netrin_module_non-TIMP"/>
</dbReference>
<dbReference type="InterPro" id="IPR041761">
    <property type="entry name" value="SFRP5_CRD"/>
</dbReference>
<dbReference type="InterPro" id="IPR008993">
    <property type="entry name" value="TIMP-like_OB-fold"/>
</dbReference>
<dbReference type="PANTHER" id="PTHR11309">
    <property type="entry name" value="FRIZZLED"/>
    <property type="match status" value="1"/>
</dbReference>
<dbReference type="PANTHER" id="PTHR11309:SF46">
    <property type="entry name" value="SECRETED FRIZZLED-RELATED PROTEIN 5"/>
    <property type="match status" value="1"/>
</dbReference>
<dbReference type="Pfam" id="PF01392">
    <property type="entry name" value="Fz"/>
    <property type="match status" value="1"/>
</dbReference>
<dbReference type="Pfam" id="PF01759">
    <property type="entry name" value="NTR"/>
    <property type="match status" value="1"/>
</dbReference>
<dbReference type="SMART" id="SM00643">
    <property type="entry name" value="C345C"/>
    <property type="match status" value="1"/>
</dbReference>
<dbReference type="SMART" id="SM00063">
    <property type="entry name" value="FRI"/>
    <property type="match status" value="1"/>
</dbReference>
<dbReference type="SUPFAM" id="SSF63501">
    <property type="entry name" value="Frizzled cysteine-rich domain"/>
    <property type="match status" value="1"/>
</dbReference>
<dbReference type="SUPFAM" id="SSF50242">
    <property type="entry name" value="TIMP-like"/>
    <property type="match status" value="1"/>
</dbReference>
<dbReference type="PROSITE" id="PS50038">
    <property type="entry name" value="FZ"/>
    <property type="match status" value="1"/>
</dbReference>
<dbReference type="PROSITE" id="PS50189">
    <property type="entry name" value="NTR"/>
    <property type="match status" value="1"/>
</dbReference>
<organism>
    <name type="scientific">Bos taurus</name>
    <name type="common">Bovine</name>
    <dbReference type="NCBI Taxonomy" id="9913"/>
    <lineage>
        <taxon>Eukaryota</taxon>
        <taxon>Metazoa</taxon>
        <taxon>Chordata</taxon>
        <taxon>Craniata</taxon>
        <taxon>Vertebrata</taxon>
        <taxon>Euteleostomi</taxon>
        <taxon>Mammalia</taxon>
        <taxon>Eutheria</taxon>
        <taxon>Laurasiatheria</taxon>
        <taxon>Artiodactyla</taxon>
        <taxon>Ruminantia</taxon>
        <taxon>Pecora</taxon>
        <taxon>Bovidae</taxon>
        <taxon>Bovinae</taxon>
        <taxon>Bos</taxon>
    </lineage>
</organism>
<feature type="signal peptide" evidence="2">
    <location>
        <begin position="1"/>
        <end position="27"/>
    </location>
</feature>
<feature type="chain" id="PRO_0000032554" description="Secreted frizzled-related protein 5">
    <location>
        <begin position="28"/>
        <end position="315"/>
    </location>
</feature>
<feature type="domain" description="FZ" evidence="3">
    <location>
        <begin position="46"/>
        <end position="163"/>
    </location>
</feature>
<feature type="domain" description="NTR" evidence="4">
    <location>
        <begin position="179"/>
        <end position="301"/>
    </location>
</feature>
<feature type="disulfide bond" evidence="1">
    <location>
        <begin position="51"/>
        <end position="114"/>
    </location>
</feature>
<feature type="disulfide bond" evidence="1">
    <location>
        <begin position="61"/>
        <end position="107"/>
    </location>
</feature>
<feature type="disulfide bond" evidence="1">
    <location>
        <begin position="98"/>
        <end position="133"/>
    </location>
</feature>
<feature type="disulfide bond" evidence="1">
    <location>
        <begin position="122"/>
        <end position="160"/>
    </location>
</feature>
<feature type="disulfide bond" evidence="1">
    <location>
        <begin position="126"/>
        <end position="150"/>
    </location>
</feature>
<feature type="disulfide bond" evidence="1">
    <location>
        <begin position="179"/>
        <end position="251"/>
    </location>
</feature>
<feature type="disulfide bond" evidence="1">
    <location>
        <begin position="182"/>
        <end position="253"/>
    </location>
</feature>
<feature type="disulfide bond" evidence="1">
    <location>
        <begin position="196"/>
        <end position="301"/>
    </location>
</feature>
<evidence type="ECO:0000250" key="1"/>
<evidence type="ECO:0000255" key="2"/>
<evidence type="ECO:0000255" key="3">
    <source>
        <dbReference type="PROSITE-ProRule" id="PRU00090"/>
    </source>
</evidence>
<evidence type="ECO:0000255" key="4">
    <source>
        <dbReference type="PROSITE-ProRule" id="PRU00295"/>
    </source>
</evidence>
<evidence type="ECO:0000269" key="5">
    <source>
    </source>
</evidence>
<evidence type="ECO:0000305" key="6"/>
<gene>
    <name type="primary">SFRP5</name>
</gene>
<proteinExistence type="evidence at transcript level"/>
<sequence>MRAAAGGARAAVLALLLGALHGAPARGEEYDYYGWQTEPLHGRSYSKPPQCLDIPADLPLCHTVGYKRMRLPNLLEHESLAEVKQQASSWLPLLAKRCHSDTQVFLCSLFAPVCLDRPIYPCRSLCEAVRAGCAPLMEAYGFPWPEMLHCHKFPLDNDLCIAVQFGHLPATAPPVTKICAQCEMEHSADGLMEQMCSSDFVVKMRIKEIKIENGDRKLIGAQKKKKLLKSGPLKRKDTKRLVLHMKNSAGCPCPQLDSLAGSFLVMGRKVDGQLLLMAVYRWDKKNKEMKFAVKFMFSYPCSLYYPFFYGAAEPH</sequence>
<protein>
    <recommendedName>
        <fullName>Secreted frizzled-related protein 5</fullName>
        <shortName>sFRP-5</shortName>
    </recommendedName>
</protein>
<comment type="function">
    <text>Soluble frizzled-related proteins (sFRPS) function as modulators of Wnt signaling through direct interaction with Wnts. They have a role in regulating cell growth and differentiation in specific cell types. SFRP5 may be involved in determining the polarity of photoreceptor, and perhaps other, cells in the retina. Inhibits Wnt8 signaling, in vitro.</text>
</comment>
<comment type="subcellular location">
    <subcellularLocation>
        <location evidence="6">Secreted</location>
    </subcellularLocation>
</comment>
<comment type="tissue specificity">
    <text evidence="5">Strongly expressed in the retinal pigment epithelium (RPE). Weak expression in retina, brain, heart, liver, kidney, testis and muscle.</text>
</comment>
<comment type="domain">
    <text evidence="1">The FZ domain is involved in binding with Wnt ligands.</text>
</comment>
<comment type="similarity">
    <text evidence="6">Belongs to the secreted frizzled-related protein (sFRP) family.</text>
</comment>
<accession>Q9XSC1</accession>
<accession>A6QP61</accession>
<reference key="1">
    <citation type="journal article" date="1999" name="Hum. Mol. Genet.">
        <title>Cloning and characterization of a secreted frizzled-related protein that is expressed by the retinal pigment epithelium.</title>
        <authorList>
            <person name="Chang J.T."/>
            <person name="Esumi N."/>
            <person name="Moore K."/>
            <person name="Li Y."/>
            <person name="Zhang S."/>
            <person name="Chew C."/>
            <person name="Goodman B."/>
            <person name="Rattner A."/>
            <person name="Moody S."/>
            <person name="Stetten G."/>
            <person name="Campochiaro P.A."/>
            <person name="Zack D.J."/>
        </authorList>
    </citation>
    <scope>NUCLEOTIDE SEQUENCE [MRNA]</scope>
    <scope>TISSUE SPECIFICITY</scope>
    <source>
        <tissue>Retinal pigment epithelium</tissue>
    </source>
</reference>
<reference key="2">
    <citation type="submission" date="2007-07" db="EMBL/GenBank/DDBJ databases">
        <authorList>
            <consortium name="NIH - Mammalian Gene Collection (MGC) project"/>
        </authorList>
    </citation>
    <scope>NUCLEOTIDE SEQUENCE [LARGE SCALE MRNA]</scope>
    <source>
        <strain>Hereford</strain>
        <tissue>Fetal skin</tissue>
    </source>
</reference>
<name>SFRP5_BOVIN</name>